<sequence length="150" mass="16404">MPIVDSGSVAPLSAAEKTKIRSAWAPVYSNYETSGVDILVKFFTSTPAAQEFFPKFKGMTSADQLKKSADVRWHAERIINAVNDAVASMDDTEKMSMKLRDLSGKHAKSFQVDPQYFKVLAAVIADTVAAGDAGFEKLMSMICILLRSAY</sequence>
<evidence type="ECO:0000250" key="1"/>
<evidence type="ECO:0000255" key="2">
    <source>
        <dbReference type="PROSITE-ProRule" id="PRU00238"/>
    </source>
</evidence>
<evidence type="ECO:0000269" key="3">
    <source ref="2"/>
</evidence>
<evidence type="ECO:0007829" key="4">
    <source>
        <dbReference type="PDB" id="1UC3"/>
    </source>
</evidence>
<comment type="subunit">
    <text evidence="3">Monomer.</text>
</comment>
<comment type="similarity">
    <text evidence="2">Belongs to the globin family.</text>
</comment>
<protein>
    <recommendedName>
        <fullName>Globin</fullName>
    </recommendedName>
</protein>
<proteinExistence type="evidence at protein level"/>
<accession>P02207</accession>
<feature type="initiator methionine" description="Removed" evidence="1">
    <location>
        <position position="1"/>
    </location>
</feature>
<feature type="chain" id="PRO_0000052525" description="Globin">
    <location>
        <begin position="2"/>
        <end position="150"/>
    </location>
</feature>
<feature type="domain" description="Globin" evidence="2">
    <location>
        <begin position="11"/>
        <end position="150"/>
    </location>
</feature>
<feature type="binding site" description="distal binding residue" evidence="2">
    <location>
        <position position="74"/>
    </location>
    <ligand>
        <name>heme b</name>
        <dbReference type="ChEBI" id="CHEBI:60344"/>
    </ligand>
    <ligandPart>
        <name>Fe</name>
        <dbReference type="ChEBI" id="CHEBI:18248"/>
    </ligandPart>
</feature>
<feature type="binding site" description="proximal binding residue">
    <location>
        <position position="106"/>
    </location>
    <ligand>
        <name>heme b</name>
        <dbReference type="ChEBI" id="CHEBI:60344"/>
    </ligand>
    <ligandPart>
        <name>Fe</name>
        <dbReference type="ChEBI" id="CHEBI:18248"/>
    </ligandPart>
</feature>
<feature type="strand" evidence="4">
    <location>
        <begin position="5"/>
        <end position="7"/>
    </location>
</feature>
<feature type="helix" evidence="4">
    <location>
        <begin position="14"/>
        <end position="28"/>
    </location>
</feature>
<feature type="helix" evidence="4">
    <location>
        <begin position="31"/>
        <end position="45"/>
    </location>
</feature>
<feature type="helix" evidence="4">
    <location>
        <begin position="47"/>
        <end position="49"/>
    </location>
</feature>
<feature type="helix" evidence="4">
    <location>
        <begin position="54"/>
        <end position="56"/>
    </location>
</feature>
<feature type="helix" evidence="4">
    <location>
        <begin position="62"/>
        <end position="67"/>
    </location>
</feature>
<feature type="helix" evidence="4">
    <location>
        <begin position="69"/>
        <end position="86"/>
    </location>
</feature>
<feature type="turn" evidence="4">
    <location>
        <begin position="87"/>
        <end position="90"/>
    </location>
</feature>
<feature type="helix" evidence="4">
    <location>
        <begin position="92"/>
        <end position="108"/>
    </location>
</feature>
<feature type="helix" evidence="4">
    <location>
        <begin position="117"/>
        <end position="129"/>
    </location>
</feature>
<feature type="helix" evidence="4">
    <location>
        <begin position="133"/>
        <end position="145"/>
    </location>
</feature>
<feature type="turn" evidence="4">
    <location>
        <begin position="146"/>
        <end position="149"/>
    </location>
</feature>
<name>GLB_LAMFL</name>
<keyword id="KW-0002">3D-structure</keyword>
<keyword id="KW-0903">Direct protein sequencing</keyword>
<keyword id="KW-0349">Heme</keyword>
<keyword id="KW-0408">Iron</keyword>
<keyword id="KW-0479">Metal-binding</keyword>
<keyword id="KW-0561">Oxygen transport</keyword>
<keyword id="KW-0813">Transport</keyword>
<dbReference type="PIR" id="A02528">
    <property type="entry name" value="GGLMF"/>
</dbReference>
<dbReference type="PDB" id="1UC3">
    <property type="method" value="X-ray"/>
    <property type="resolution" value="2.30 A"/>
    <property type="chains" value="A/B/C/D/E/F/G/H/I/J/K/L=2-150"/>
</dbReference>
<dbReference type="PDBsum" id="1UC3"/>
<dbReference type="SMR" id="P02207"/>
<dbReference type="EvolutionaryTrace" id="P02207"/>
<dbReference type="GO" id="GO:0020037">
    <property type="term" value="F:heme binding"/>
    <property type="evidence" value="ECO:0007669"/>
    <property type="project" value="InterPro"/>
</dbReference>
<dbReference type="GO" id="GO:0005506">
    <property type="term" value="F:iron ion binding"/>
    <property type="evidence" value="ECO:0007669"/>
    <property type="project" value="InterPro"/>
</dbReference>
<dbReference type="GO" id="GO:0016491">
    <property type="term" value="F:oxidoreductase activity"/>
    <property type="evidence" value="ECO:0007669"/>
    <property type="project" value="UniProtKB-ARBA"/>
</dbReference>
<dbReference type="GO" id="GO:0019825">
    <property type="term" value="F:oxygen binding"/>
    <property type="evidence" value="ECO:0007669"/>
    <property type="project" value="InterPro"/>
</dbReference>
<dbReference type="GO" id="GO:0005344">
    <property type="term" value="F:oxygen carrier activity"/>
    <property type="evidence" value="ECO:0007669"/>
    <property type="project" value="UniProtKB-KW"/>
</dbReference>
<dbReference type="Gene3D" id="1.10.490.10">
    <property type="entry name" value="Globins"/>
    <property type="match status" value="1"/>
</dbReference>
<dbReference type="InterPro" id="IPR000971">
    <property type="entry name" value="Globin"/>
</dbReference>
<dbReference type="InterPro" id="IPR009050">
    <property type="entry name" value="Globin-like_sf"/>
</dbReference>
<dbReference type="InterPro" id="IPR012292">
    <property type="entry name" value="Globin/Proto"/>
</dbReference>
<dbReference type="InterPro" id="IPR013314">
    <property type="entry name" value="Globin_lamprey/hagfish"/>
</dbReference>
<dbReference type="PANTHER" id="PTHR46783">
    <property type="entry name" value="CYTOGLOBIN"/>
    <property type="match status" value="1"/>
</dbReference>
<dbReference type="PANTHER" id="PTHR46783:SF1">
    <property type="entry name" value="CYTOGLOBIN-1-RELATED"/>
    <property type="match status" value="1"/>
</dbReference>
<dbReference type="Pfam" id="PF00042">
    <property type="entry name" value="Globin"/>
    <property type="match status" value="1"/>
</dbReference>
<dbReference type="PRINTS" id="PR01906">
    <property type="entry name" value="FISHGLOBIN"/>
</dbReference>
<dbReference type="SUPFAM" id="SSF46458">
    <property type="entry name" value="Globin-like"/>
    <property type="match status" value="1"/>
</dbReference>
<dbReference type="PROSITE" id="PS01033">
    <property type="entry name" value="GLOBIN"/>
    <property type="match status" value="1"/>
</dbReference>
<reference key="1">
    <citation type="journal article" date="1979" name="Hoppe-Seyler's Z. Physiol. Chem.">
        <title>Hemoglobins, XXX. The amino acid sequence of the monomeric hemoglobin from Lampetra fluviatilis.</title>
        <authorList>
            <person name="Zelenik M."/>
            <person name="Rudloff V."/>
            <person name="Braunitzer G."/>
        </authorList>
    </citation>
    <scope>PROTEIN SEQUENCE OF 2-150</scope>
</reference>
<reference key="2">
    <citation type="submission" date="2003-04" db="PDB data bank">
        <title>Crystal structure analysis of river lamprey hemoglobin I.</title>
        <authorList>
            <person name="Seki M."/>
            <person name="Yao M."/>
            <person name="Yazawa Y."/>
            <person name="Tanaka I."/>
        </authorList>
    </citation>
    <scope>X-RAY CRYSTALLOGRAPHY (2.30 ANGSTROMS) IN COMPLEX WITH HEME</scope>
</reference>
<organism>
    <name type="scientific">Lampetra fluviatilis</name>
    <name type="common">European river lamprey</name>
    <name type="synonym">Petromyzon fluviatilis</name>
    <dbReference type="NCBI Taxonomy" id="7748"/>
    <lineage>
        <taxon>Eukaryota</taxon>
        <taxon>Metazoa</taxon>
        <taxon>Chordata</taxon>
        <taxon>Craniata</taxon>
        <taxon>Vertebrata</taxon>
        <taxon>Cyclostomata</taxon>
        <taxon>Hyperoartia</taxon>
        <taxon>Petromyzontiformes</taxon>
        <taxon>Petromyzontidae</taxon>
        <taxon>Lampetra</taxon>
    </lineage>
</organism>